<comment type="function">
    <text evidence="3 4">Component of the MICOS complex, a large protein complex of the mitochondrial inner membrane that plays crucial roles in the maintenance of crista junctions, inner membrane architecture, and formation of contact sites to the outer membrane.</text>
</comment>
<comment type="subunit">
    <text evidence="5">Component of the mitochondrial contact site and cristae organizing system (MICOS) complex, composed of at least MIC10, MIC12, MIC19, MIC26, MIC27 and MIC60. This complex was also known under the names MINOS or MitOS complex.</text>
</comment>
<comment type="subcellular location">
    <subcellularLocation>
        <location evidence="6">Mitochondrion inner membrane</location>
        <topology evidence="6">Multi-pass membrane protein</topology>
    </subcellularLocation>
    <text evidence="3 4 5">Enriched at crista junctions.</text>
</comment>
<comment type="disruption phenotype">
    <text evidence="4">Moderate changes in the mitochondrial morphology.</text>
</comment>
<comment type="miscellaneous">
    <text evidence="2">Present with 5220 molecules/cell in log phase SD medium.</text>
</comment>
<comment type="similarity">
    <text evidence="6">Belongs to the apolipoprotein O/MICOS complex subunit Mic27 family. Yeast Mic26 subfamily.</text>
</comment>
<keyword id="KW-0472">Membrane</keyword>
<keyword id="KW-0496">Mitochondrion</keyword>
<keyword id="KW-0999">Mitochondrion inner membrane</keyword>
<keyword id="KW-1185">Reference proteome</keyword>
<keyword id="KW-0812">Transmembrane</keyword>
<keyword id="KW-1133">Transmembrane helix</keyword>
<evidence type="ECO:0000255" key="1"/>
<evidence type="ECO:0000269" key="2">
    <source>
    </source>
</evidence>
<evidence type="ECO:0000269" key="3">
    <source>
    </source>
</evidence>
<evidence type="ECO:0000269" key="4">
    <source>
    </source>
</evidence>
<evidence type="ECO:0000269" key="5">
    <source>
    </source>
</evidence>
<evidence type="ECO:0000305" key="6"/>
<reference key="1">
    <citation type="journal article" date="1996" name="Yeast">
        <title>Sequence analysis of the 43 kb CRM1-YLM9-PET54-DIE2-SMI1-PHO81-YHB4-PFK1 region from the right arm of Saccharomyces cerevisiae chromosome VII.</title>
        <authorList>
            <person name="van der Aart Q.J.M."/>
            <person name="Kleine K."/>
            <person name="Steensma H.Y."/>
        </authorList>
    </citation>
    <scope>NUCLEOTIDE SEQUENCE [GENOMIC DNA]</scope>
    <source>
        <strain>ATCC 204508 / S288c</strain>
    </source>
</reference>
<reference key="2">
    <citation type="journal article" date="1997" name="Nature">
        <title>The nucleotide sequence of Saccharomyces cerevisiae chromosome VII.</title>
        <authorList>
            <person name="Tettelin H."/>
            <person name="Agostoni-Carbone M.L."/>
            <person name="Albermann K."/>
            <person name="Albers M."/>
            <person name="Arroyo J."/>
            <person name="Backes U."/>
            <person name="Barreiros T."/>
            <person name="Bertani I."/>
            <person name="Bjourson A.J."/>
            <person name="Brueckner M."/>
            <person name="Bruschi C.V."/>
            <person name="Carignani G."/>
            <person name="Castagnoli L."/>
            <person name="Cerdan E."/>
            <person name="Clemente M.L."/>
            <person name="Coblenz A."/>
            <person name="Coglievina M."/>
            <person name="Coissac E."/>
            <person name="Defoor E."/>
            <person name="Del Bino S."/>
            <person name="Delius H."/>
            <person name="Delneri D."/>
            <person name="de Wergifosse P."/>
            <person name="Dujon B."/>
            <person name="Durand P."/>
            <person name="Entian K.-D."/>
            <person name="Eraso P."/>
            <person name="Escribano V."/>
            <person name="Fabiani L."/>
            <person name="Fartmann B."/>
            <person name="Feroli F."/>
            <person name="Feuermann M."/>
            <person name="Frontali L."/>
            <person name="Garcia-Gonzalez M."/>
            <person name="Garcia-Saez M.I."/>
            <person name="Goffeau A."/>
            <person name="Guerreiro P."/>
            <person name="Hani J."/>
            <person name="Hansen M."/>
            <person name="Hebling U."/>
            <person name="Hernandez K."/>
            <person name="Heumann K."/>
            <person name="Hilger F."/>
            <person name="Hofmann B."/>
            <person name="Indge K.J."/>
            <person name="James C.M."/>
            <person name="Klima R."/>
            <person name="Koetter P."/>
            <person name="Kramer B."/>
            <person name="Kramer W."/>
            <person name="Lauquin G."/>
            <person name="Leuther H."/>
            <person name="Louis E.J."/>
            <person name="Maillier E."/>
            <person name="Marconi A."/>
            <person name="Martegani E."/>
            <person name="Mazon M.J."/>
            <person name="Mazzoni C."/>
            <person name="McReynolds A.D.K."/>
            <person name="Melchioretto P."/>
            <person name="Mewes H.-W."/>
            <person name="Minenkova O."/>
            <person name="Mueller-Auer S."/>
            <person name="Nawrocki A."/>
            <person name="Netter P."/>
            <person name="Neu R."/>
            <person name="Nombela C."/>
            <person name="Oliver S.G."/>
            <person name="Panzeri L."/>
            <person name="Paoluzi S."/>
            <person name="Plevani P."/>
            <person name="Portetelle D."/>
            <person name="Portillo F."/>
            <person name="Potier S."/>
            <person name="Purnelle B."/>
            <person name="Rieger M."/>
            <person name="Riles L."/>
            <person name="Rinaldi T."/>
            <person name="Robben J."/>
            <person name="Rodrigues-Pousada C."/>
            <person name="Rodriguez-Belmonte E."/>
            <person name="Rodriguez-Torres A.M."/>
            <person name="Rose M."/>
            <person name="Ruzzi M."/>
            <person name="Saliola M."/>
            <person name="Sanchez-Perez M."/>
            <person name="Schaefer B."/>
            <person name="Schaefer M."/>
            <person name="Scharfe M."/>
            <person name="Schmidheini T."/>
            <person name="Schreer A."/>
            <person name="Skala J."/>
            <person name="Souciet J.-L."/>
            <person name="Steensma H.Y."/>
            <person name="Talla E."/>
            <person name="Thierry A."/>
            <person name="Vandenbol M."/>
            <person name="van der Aart Q.J.M."/>
            <person name="Van Dyck L."/>
            <person name="Vanoni M."/>
            <person name="Verhasselt P."/>
            <person name="Voet M."/>
            <person name="Volckaert G."/>
            <person name="Wambutt R."/>
            <person name="Watson M.D."/>
            <person name="Weber N."/>
            <person name="Wedler E."/>
            <person name="Wedler H."/>
            <person name="Wipfli P."/>
            <person name="Wolf K."/>
            <person name="Wright L.F."/>
            <person name="Zaccaria P."/>
            <person name="Zimmermann M."/>
            <person name="Zollner A."/>
            <person name="Kleine K."/>
        </authorList>
    </citation>
    <scope>NUCLEOTIDE SEQUENCE [LARGE SCALE GENOMIC DNA]</scope>
    <source>
        <strain>ATCC 204508 / S288c</strain>
    </source>
</reference>
<reference key="3">
    <citation type="journal article" date="2014" name="G3 (Bethesda)">
        <title>The reference genome sequence of Saccharomyces cerevisiae: Then and now.</title>
        <authorList>
            <person name="Engel S.R."/>
            <person name="Dietrich F.S."/>
            <person name="Fisk D.G."/>
            <person name="Binkley G."/>
            <person name="Balakrishnan R."/>
            <person name="Costanzo M.C."/>
            <person name="Dwight S.S."/>
            <person name="Hitz B.C."/>
            <person name="Karra K."/>
            <person name="Nash R.S."/>
            <person name="Weng S."/>
            <person name="Wong E.D."/>
            <person name="Lloyd P."/>
            <person name="Skrzypek M.S."/>
            <person name="Miyasato S.R."/>
            <person name="Simison M."/>
            <person name="Cherry J.M."/>
        </authorList>
    </citation>
    <scope>GENOME REANNOTATION</scope>
    <source>
        <strain>ATCC 204508 / S288c</strain>
    </source>
</reference>
<reference key="4">
    <citation type="journal article" date="2007" name="Genome Res.">
        <title>Approaching a complete repository of sequence-verified protein-encoding clones for Saccharomyces cerevisiae.</title>
        <authorList>
            <person name="Hu Y."/>
            <person name="Rolfs A."/>
            <person name="Bhullar B."/>
            <person name="Murthy T.V.S."/>
            <person name="Zhu C."/>
            <person name="Berger M.F."/>
            <person name="Camargo A.A."/>
            <person name="Kelley F."/>
            <person name="McCarron S."/>
            <person name="Jepson D."/>
            <person name="Richardson A."/>
            <person name="Raphael J."/>
            <person name="Moreira D."/>
            <person name="Taycher E."/>
            <person name="Zuo D."/>
            <person name="Mohr S."/>
            <person name="Kane M.F."/>
            <person name="Williamson J."/>
            <person name="Simpson A.J.G."/>
            <person name="Bulyk M.L."/>
            <person name="Harlow E."/>
            <person name="Marsischky G."/>
            <person name="Kolodner R.D."/>
            <person name="LaBaer J."/>
        </authorList>
    </citation>
    <scope>NUCLEOTIDE SEQUENCE [GENOMIC DNA]</scope>
    <source>
        <strain>ATCC 204508 / S288c</strain>
    </source>
</reference>
<reference key="5">
    <citation type="journal article" date="2003" name="Nature">
        <title>Global analysis of protein expression in yeast.</title>
        <authorList>
            <person name="Ghaemmaghami S."/>
            <person name="Huh W.-K."/>
            <person name="Bower K."/>
            <person name="Howson R.W."/>
            <person name="Belle A."/>
            <person name="Dephoure N."/>
            <person name="O'Shea E.K."/>
            <person name="Weissman J.S."/>
        </authorList>
    </citation>
    <scope>LEVEL OF PROTEIN EXPRESSION [LARGE SCALE ANALYSIS]</scope>
</reference>
<reference key="6">
    <citation type="journal article" date="2011" name="Dev. Cell">
        <title>Dual role of mitofilin in mitochondrial membrane organization and protein biogenesis.</title>
        <authorList>
            <person name="von der Malsburg K."/>
            <person name="Muller J.M."/>
            <person name="Bohnert M."/>
            <person name="Oeljeklaus S."/>
            <person name="Kwiatkowska P."/>
            <person name="Becker T."/>
            <person name="Loniewska-Lwowska A."/>
            <person name="Wiese S."/>
            <person name="Rao S."/>
            <person name="Milenkovic D."/>
            <person name="Hutu D.P."/>
            <person name="Zerbes R.M."/>
            <person name="Schulze-Specking A."/>
            <person name="Meyer H.E."/>
            <person name="Martinou J.C."/>
            <person name="Rospert S."/>
            <person name="Rehling P."/>
            <person name="Meisinger C."/>
            <person name="Veenhuis M."/>
            <person name="Warscheid B."/>
            <person name="van der Klei I.J."/>
            <person name="Pfanner N."/>
            <person name="Chacinska A."/>
            <person name="van der Laan M."/>
        </authorList>
    </citation>
    <scope>FUNCTION</scope>
    <scope>COMPOSITION OF THE MICOS COMPLEX</scope>
    <scope>SUBCELLULAR LOCATION</scope>
</reference>
<reference key="7">
    <citation type="journal article" date="2011" name="EMBO J.">
        <title>The mitochondrial contact site complex, a determinant of mitochondrial architecture.</title>
        <authorList>
            <person name="Harner M."/>
            <person name="Korner C."/>
            <person name="Walther D."/>
            <person name="Mokranjac D."/>
            <person name="Kaesmacher J."/>
            <person name="Welsch U."/>
            <person name="Griffith J."/>
            <person name="Mann M."/>
            <person name="Reggiori F."/>
            <person name="Neupert W."/>
        </authorList>
    </citation>
    <scope>IDENTIFICATION IN THE MICOS COMPLEX</scope>
    <scope>MASS SPECTROMETRY</scope>
    <scope>SUBCELLULAR LOCATION</scope>
    <scope>TOPOLOGY</scope>
</reference>
<reference key="8">
    <citation type="journal article" date="2011" name="J. Cell Biol.">
        <title>A mitochondrial-focused genetic interaction map reveals a scaffold-like complex required for inner membrane organization in mitochondria.</title>
        <authorList>
            <person name="Hoppins S."/>
            <person name="Collins S.R."/>
            <person name="Cassidy-Stone A."/>
            <person name="Hummel E."/>
            <person name="Devay R.M."/>
            <person name="Lackner L.L."/>
            <person name="Westermann B."/>
            <person name="Schuldiner M."/>
            <person name="Weissman J.S."/>
            <person name="Nunnari J."/>
        </authorList>
    </citation>
    <scope>FUNCTION</scope>
    <scope>COMPOSITION OF THE MICOS COMPLEX</scope>
    <scope>SUBCELLULAR LOCATION</scope>
    <scope>DISRUPTION PHENOTYPE</scope>
</reference>
<reference key="9">
    <citation type="journal article" date="2014" name="J. Cell Biol.">
        <title>Uniform nomenclature for the mitochondrial contact site and cristae organizing system.</title>
        <authorList>
            <person name="Pfanner N."/>
            <person name="van der Laan M."/>
            <person name="Amati P."/>
            <person name="Capaldi R.A."/>
            <person name="Caudy A.A."/>
            <person name="Chacinska A."/>
            <person name="Darshi M."/>
            <person name="Deckers M."/>
            <person name="Hoppins S."/>
            <person name="Icho T."/>
            <person name="Jakobs S."/>
            <person name="Ji J."/>
            <person name="Kozjak-Pavlovic V."/>
            <person name="Meisinger C."/>
            <person name="Odgren P.R."/>
            <person name="Park S.K."/>
            <person name="Rehling P."/>
            <person name="Reichert A.S."/>
            <person name="Sheikh M.S."/>
            <person name="Taylor S.S."/>
            <person name="Tsuchida N."/>
            <person name="van der Bliek A.M."/>
            <person name="van der Klei I.J."/>
            <person name="Weissman J.S."/>
            <person name="Westermann B."/>
            <person name="Zha J."/>
            <person name="Neupert W."/>
            <person name="Nunnari J."/>
        </authorList>
    </citation>
    <scope>NOMENCLATURE</scope>
</reference>
<feature type="chain" id="PRO_0000202852" description="MICOS subunit MIC26">
    <location>
        <begin position="1"/>
        <end position="233"/>
    </location>
</feature>
<feature type="topological domain" description="Mitochondrial intermembrane" evidence="1">
    <location>
        <begin position="1"/>
        <end position="119"/>
    </location>
</feature>
<feature type="transmembrane region" description="Helical" evidence="1">
    <location>
        <begin position="120"/>
        <end position="137"/>
    </location>
</feature>
<feature type="topological domain" description="Mitochondrial matrix" evidence="1">
    <location>
        <begin position="138"/>
        <end position="141"/>
    </location>
</feature>
<feature type="transmembrane region" description="Helical" evidence="1">
    <location>
        <begin position="142"/>
        <end position="164"/>
    </location>
</feature>
<feature type="topological domain" description="Mitochondrial intermembrane" evidence="1">
    <location>
        <begin position="165"/>
        <end position="233"/>
    </location>
</feature>
<accession>P50087</accession>
<accession>D6VV15</accession>
<dbReference type="EMBL" id="X87941">
    <property type="protein sequence ID" value="CAA61185.1"/>
    <property type="molecule type" value="Genomic_DNA"/>
</dbReference>
<dbReference type="EMBL" id="Z73020">
    <property type="protein sequence ID" value="CAA97263.1"/>
    <property type="molecule type" value="Genomic_DNA"/>
</dbReference>
<dbReference type="EMBL" id="AY558276">
    <property type="protein sequence ID" value="AAS56602.1"/>
    <property type="molecule type" value="Genomic_DNA"/>
</dbReference>
<dbReference type="EMBL" id="BK006941">
    <property type="protein sequence ID" value="DAA08326.1"/>
    <property type="molecule type" value="Genomic_DNA"/>
</dbReference>
<dbReference type="PIR" id="S57700">
    <property type="entry name" value="S57700"/>
</dbReference>
<dbReference type="RefSeq" id="NP_011751.1">
    <property type="nucleotide sequence ID" value="NM_001181364.1"/>
</dbReference>
<dbReference type="BioGRID" id="33487">
    <property type="interactions" value="50"/>
</dbReference>
<dbReference type="ComplexPortal" id="CPX-140">
    <property type="entry name" value="MICOS mitochondrial contact site and cristae organizing system complex"/>
</dbReference>
<dbReference type="DIP" id="DIP-4903N"/>
<dbReference type="FunCoup" id="P50087">
    <property type="interactions" value="61"/>
</dbReference>
<dbReference type="IntAct" id="P50087">
    <property type="interactions" value="7"/>
</dbReference>
<dbReference type="MINT" id="P50087"/>
<dbReference type="STRING" id="4932.YGR235C"/>
<dbReference type="TCDB" id="8.A.156.2.1">
    <property type="family name" value="the micos complex (micos-c) family"/>
</dbReference>
<dbReference type="iPTMnet" id="P50087"/>
<dbReference type="PaxDb" id="4932-YGR235C"/>
<dbReference type="PeptideAtlas" id="P50087"/>
<dbReference type="EnsemblFungi" id="YGR235C_mRNA">
    <property type="protein sequence ID" value="YGR235C"/>
    <property type="gene ID" value="YGR235C"/>
</dbReference>
<dbReference type="GeneID" id="853150"/>
<dbReference type="KEGG" id="sce:YGR235C"/>
<dbReference type="AGR" id="SGD:S000003467"/>
<dbReference type="SGD" id="S000003467">
    <property type="gene designation" value="MIC26"/>
</dbReference>
<dbReference type="VEuPathDB" id="FungiDB:YGR235C"/>
<dbReference type="eggNOG" id="ENOG502S70K">
    <property type="taxonomic scope" value="Eukaryota"/>
</dbReference>
<dbReference type="HOGENOM" id="CLU_086433_1_0_1"/>
<dbReference type="InParanoid" id="P50087"/>
<dbReference type="OMA" id="QMIFNES"/>
<dbReference type="OrthoDB" id="2399148at2759"/>
<dbReference type="BioCyc" id="YEAST:G3O-30913-MONOMER"/>
<dbReference type="BioGRID-ORCS" id="853150">
    <property type="hits" value="0 hits in 10 CRISPR screens"/>
</dbReference>
<dbReference type="PRO" id="PR:P50087"/>
<dbReference type="Proteomes" id="UP000002311">
    <property type="component" value="Chromosome VII"/>
</dbReference>
<dbReference type="RNAct" id="P50087">
    <property type="molecule type" value="protein"/>
</dbReference>
<dbReference type="GO" id="GO:0061617">
    <property type="term" value="C:MICOS complex"/>
    <property type="evidence" value="ECO:0000314"/>
    <property type="project" value="SGD"/>
</dbReference>
<dbReference type="GO" id="GO:0044284">
    <property type="term" value="C:mitochondrial crista junction"/>
    <property type="evidence" value="ECO:0000314"/>
    <property type="project" value="ComplexPortal"/>
</dbReference>
<dbReference type="GO" id="GO:0005743">
    <property type="term" value="C:mitochondrial inner membrane"/>
    <property type="evidence" value="ECO:0000304"/>
    <property type="project" value="Reactome"/>
</dbReference>
<dbReference type="GO" id="GO:0005739">
    <property type="term" value="C:mitochondrion"/>
    <property type="evidence" value="ECO:0000314"/>
    <property type="project" value="ComplexPortal"/>
</dbReference>
<dbReference type="GO" id="GO:0042407">
    <property type="term" value="P:cristae formation"/>
    <property type="evidence" value="ECO:0000315"/>
    <property type="project" value="SGD"/>
</dbReference>
<dbReference type="GO" id="GO:0032460">
    <property type="term" value="P:negative regulation of protein oligomerization"/>
    <property type="evidence" value="ECO:0000315"/>
    <property type="project" value="SGD"/>
</dbReference>
<dbReference type="InterPro" id="IPR019166">
    <property type="entry name" value="MIC26/MIC27"/>
</dbReference>
<dbReference type="InterPro" id="IPR033181">
    <property type="entry name" value="Mic26_fungi"/>
</dbReference>
<dbReference type="PANTHER" id="PTHR28268">
    <property type="entry name" value="MICOS SUBUNIT MIC26"/>
    <property type="match status" value="1"/>
</dbReference>
<dbReference type="PANTHER" id="PTHR28268:SF1">
    <property type="entry name" value="MICOS SUBUNIT MIC26"/>
    <property type="match status" value="1"/>
</dbReference>
<dbReference type="Pfam" id="PF09769">
    <property type="entry name" value="ApoO"/>
    <property type="match status" value="1"/>
</dbReference>
<gene>
    <name type="primary">MIC26</name>
    <name type="synonym">MCS29</name>
    <name type="synonym">MIO27</name>
    <name type="synonym">MOS2</name>
    <name type="ordered locus">YGR235C</name>
    <name type="ORF">G8575</name>
</gene>
<name>MIC26_YEAST</name>
<organism>
    <name type="scientific">Saccharomyces cerevisiae (strain ATCC 204508 / S288c)</name>
    <name type="common">Baker's yeast</name>
    <dbReference type="NCBI Taxonomy" id="559292"/>
    <lineage>
        <taxon>Eukaryota</taxon>
        <taxon>Fungi</taxon>
        <taxon>Dikarya</taxon>
        <taxon>Ascomycota</taxon>
        <taxon>Saccharomycotina</taxon>
        <taxon>Saccharomycetes</taxon>
        <taxon>Saccharomycetales</taxon>
        <taxon>Saccharomycetaceae</taxon>
        <taxon>Saccharomyces</taxon>
    </lineage>
</organism>
<sequence>MTKDFYRQLDPVEEKIVPPENAIVISSEAKEATVNEKEAKQGVLSQRVMKYIGENELVDGISVRDPDYLKRFFNERRKQFSAKWDKVTNKIDDIAGRYYAREESFTSTIASLHTDPNERLIPGLLSILVASMTGSVLARRRTWLLRATMPIILGSCCFAYAMPTTFRNTMGLIHNLEMNTFPHFTERQDRVWKETKRLSTASVQYYYDAKKWLNKDVEKTGNAIKNWTGVNVK</sequence>
<protein>
    <recommendedName>
        <fullName>MICOS subunit MIC26</fullName>
    </recommendedName>
    <alternativeName>
        <fullName>Mitochondrial contact site complex 29 kDa subunit</fullName>
    </alternativeName>
    <alternativeName>
        <fullName>Mitochondrial inner membrane organization component of 27 kDa</fullName>
    </alternativeName>
    <alternativeName>
        <fullName>Mitochondrial organizing structure protein 2</fullName>
        <shortName>MitOS2</shortName>
    </alternativeName>
</protein>
<proteinExistence type="evidence at protein level"/>